<evidence type="ECO:0000255" key="1">
    <source>
        <dbReference type="HAMAP-Rule" id="MF_00110"/>
    </source>
</evidence>
<reference key="1">
    <citation type="journal article" date="2007" name="Science">
        <title>The Calyptogena magnifica chemoautotrophic symbiont genome.</title>
        <authorList>
            <person name="Newton I.L.G."/>
            <person name="Woyke T."/>
            <person name="Auchtung T.A."/>
            <person name="Dilly G.F."/>
            <person name="Dutton R.J."/>
            <person name="Fisher M.C."/>
            <person name="Fontanez K.M."/>
            <person name="Lau E."/>
            <person name="Stewart F.J."/>
            <person name="Richardson P.M."/>
            <person name="Barry K.W."/>
            <person name="Saunders E."/>
            <person name="Detter J.C."/>
            <person name="Wu D."/>
            <person name="Eisen J.A."/>
            <person name="Cavanaugh C.M."/>
        </authorList>
    </citation>
    <scope>NUCLEOTIDE SEQUENCE [LARGE SCALE GENOMIC DNA]</scope>
</reference>
<sequence length="359" mass="40035">MKTLNLDLQEKSYPIYIGQDLLSEGKLLTKHISGKQVMIVTNTTVAPLYLEKVQNLLLSFEFAQVILPDGEKYKTLDTLNCIFNALLKNRFDRSCTLIALGGGVVGDMTGFAAASYQRGVNFIQIPTTLLSQVDSSVGGKTGINHVLGKNMIGIFHQPKCVLIDIDTLDTLNNQQYSAGMAEVIKYGLLGHLNFFNFLQENIRDLMDRNKPLMAEIIYQSCQYKINIVVQDELEVGKRALLNLGHTFGHVIENILGYGIFLHGEAISVGMLMAVKLSHLEGYLSINQVAQVQDLLEKANLPIFIIGKISASDFMKVMLVDKKVINGNIRLILLKELGHAFVCNHYKDQLLNQVINEFCQ</sequence>
<proteinExistence type="inferred from homology"/>
<feature type="chain" id="PRO_1000094591" description="3-dehydroquinate synthase">
    <location>
        <begin position="1"/>
        <end position="359"/>
    </location>
</feature>
<feature type="binding site" evidence="1">
    <location>
        <begin position="69"/>
        <end position="74"/>
    </location>
    <ligand>
        <name>NAD(+)</name>
        <dbReference type="ChEBI" id="CHEBI:57540"/>
    </ligand>
</feature>
<feature type="binding site" evidence="1">
    <location>
        <begin position="103"/>
        <end position="107"/>
    </location>
    <ligand>
        <name>NAD(+)</name>
        <dbReference type="ChEBI" id="CHEBI:57540"/>
    </ligand>
</feature>
<feature type="binding site" evidence="1">
    <location>
        <begin position="127"/>
        <end position="128"/>
    </location>
    <ligand>
        <name>NAD(+)</name>
        <dbReference type="ChEBI" id="CHEBI:57540"/>
    </ligand>
</feature>
<feature type="binding site" evidence="1">
    <location>
        <position position="140"/>
    </location>
    <ligand>
        <name>NAD(+)</name>
        <dbReference type="ChEBI" id="CHEBI:57540"/>
    </ligand>
</feature>
<feature type="binding site" evidence="1">
    <location>
        <position position="149"/>
    </location>
    <ligand>
        <name>NAD(+)</name>
        <dbReference type="ChEBI" id="CHEBI:57540"/>
    </ligand>
</feature>
<feature type="binding site" evidence="1">
    <location>
        <begin position="167"/>
        <end position="170"/>
    </location>
    <ligand>
        <name>NAD(+)</name>
        <dbReference type="ChEBI" id="CHEBI:57540"/>
    </ligand>
</feature>
<feature type="binding site" evidence="1">
    <location>
        <position position="182"/>
    </location>
    <ligand>
        <name>Zn(2+)</name>
        <dbReference type="ChEBI" id="CHEBI:29105"/>
    </ligand>
</feature>
<feature type="binding site" evidence="1">
    <location>
        <position position="245"/>
    </location>
    <ligand>
        <name>Zn(2+)</name>
        <dbReference type="ChEBI" id="CHEBI:29105"/>
    </ligand>
</feature>
<feature type="binding site" evidence="1">
    <location>
        <position position="262"/>
    </location>
    <ligand>
        <name>Zn(2+)</name>
        <dbReference type="ChEBI" id="CHEBI:29105"/>
    </ligand>
</feature>
<gene>
    <name evidence="1" type="primary">aroB</name>
    <name type="ordered locus">Rmag_0341</name>
</gene>
<dbReference type="EC" id="4.2.3.4" evidence="1"/>
<dbReference type="EMBL" id="CP000488">
    <property type="protein sequence ID" value="ABL02117.1"/>
    <property type="molecule type" value="Genomic_DNA"/>
</dbReference>
<dbReference type="RefSeq" id="WP_011737742.1">
    <property type="nucleotide sequence ID" value="NC_008610.1"/>
</dbReference>
<dbReference type="SMR" id="A1AW10"/>
<dbReference type="STRING" id="413404.Rmag_0341"/>
<dbReference type="KEGG" id="rma:Rmag_0341"/>
<dbReference type="eggNOG" id="COG0337">
    <property type="taxonomic scope" value="Bacteria"/>
</dbReference>
<dbReference type="HOGENOM" id="CLU_001201_0_2_6"/>
<dbReference type="OrthoDB" id="9806583at2"/>
<dbReference type="UniPathway" id="UPA00053">
    <property type="reaction ID" value="UER00085"/>
</dbReference>
<dbReference type="Proteomes" id="UP000002587">
    <property type="component" value="Chromosome"/>
</dbReference>
<dbReference type="GO" id="GO:0005737">
    <property type="term" value="C:cytoplasm"/>
    <property type="evidence" value="ECO:0007669"/>
    <property type="project" value="UniProtKB-SubCell"/>
</dbReference>
<dbReference type="GO" id="GO:0003856">
    <property type="term" value="F:3-dehydroquinate synthase activity"/>
    <property type="evidence" value="ECO:0007669"/>
    <property type="project" value="UniProtKB-UniRule"/>
</dbReference>
<dbReference type="GO" id="GO:0046872">
    <property type="term" value="F:metal ion binding"/>
    <property type="evidence" value="ECO:0007669"/>
    <property type="project" value="UniProtKB-KW"/>
</dbReference>
<dbReference type="GO" id="GO:0000166">
    <property type="term" value="F:nucleotide binding"/>
    <property type="evidence" value="ECO:0007669"/>
    <property type="project" value="UniProtKB-KW"/>
</dbReference>
<dbReference type="GO" id="GO:0008652">
    <property type="term" value="P:amino acid biosynthetic process"/>
    <property type="evidence" value="ECO:0007669"/>
    <property type="project" value="UniProtKB-KW"/>
</dbReference>
<dbReference type="GO" id="GO:0009073">
    <property type="term" value="P:aromatic amino acid family biosynthetic process"/>
    <property type="evidence" value="ECO:0007669"/>
    <property type="project" value="UniProtKB-KW"/>
</dbReference>
<dbReference type="GO" id="GO:0009423">
    <property type="term" value="P:chorismate biosynthetic process"/>
    <property type="evidence" value="ECO:0007669"/>
    <property type="project" value="UniProtKB-UniRule"/>
</dbReference>
<dbReference type="CDD" id="cd08195">
    <property type="entry name" value="DHQS"/>
    <property type="match status" value="1"/>
</dbReference>
<dbReference type="FunFam" id="3.40.50.1970:FF:000001">
    <property type="entry name" value="3-dehydroquinate synthase"/>
    <property type="match status" value="1"/>
</dbReference>
<dbReference type="Gene3D" id="3.40.50.1970">
    <property type="match status" value="1"/>
</dbReference>
<dbReference type="Gene3D" id="1.20.1090.10">
    <property type="entry name" value="Dehydroquinate synthase-like - alpha domain"/>
    <property type="match status" value="1"/>
</dbReference>
<dbReference type="HAMAP" id="MF_00110">
    <property type="entry name" value="DHQ_synthase"/>
    <property type="match status" value="1"/>
</dbReference>
<dbReference type="InterPro" id="IPR050071">
    <property type="entry name" value="Dehydroquinate_synthase"/>
</dbReference>
<dbReference type="InterPro" id="IPR016037">
    <property type="entry name" value="DHQ_synth_AroB"/>
</dbReference>
<dbReference type="InterPro" id="IPR030963">
    <property type="entry name" value="DHQ_synth_fam"/>
</dbReference>
<dbReference type="InterPro" id="IPR030960">
    <property type="entry name" value="DHQS/DOIS_N"/>
</dbReference>
<dbReference type="InterPro" id="IPR056179">
    <property type="entry name" value="DHQS_C"/>
</dbReference>
<dbReference type="NCBIfam" id="TIGR01357">
    <property type="entry name" value="aroB"/>
    <property type="match status" value="1"/>
</dbReference>
<dbReference type="PANTHER" id="PTHR43622">
    <property type="entry name" value="3-DEHYDROQUINATE SYNTHASE"/>
    <property type="match status" value="1"/>
</dbReference>
<dbReference type="PANTHER" id="PTHR43622:SF7">
    <property type="entry name" value="3-DEHYDROQUINATE SYNTHASE, CHLOROPLASTIC"/>
    <property type="match status" value="1"/>
</dbReference>
<dbReference type="Pfam" id="PF01761">
    <property type="entry name" value="DHQ_synthase"/>
    <property type="match status" value="1"/>
</dbReference>
<dbReference type="Pfam" id="PF24621">
    <property type="entry name" value="DHQS_C"/>
    <property type="match status" value="1"/>
</dbReference>
<dbReference type="PIRSF" id="PIRSF001455">
    <property type="entry name" value="DHQ_synth"/>
    <property type="match status" value="1"/>
</dbReference>
<dbReference type="SUPFAM" id="SSF56796">
    <property type="entry name" value="Dehydroquinate synthase-like"/>
    <property type="match status" value="1"/>
</dbReference>
<keyword id="KW-0028">Amino-acid biosynthesis</keyword>
<keyword id="KW-0057">Aromatic amino acid biosynthesis</keyword>
<keyword id="KW-0170">Cobalt</keyword>
<keyword id="KW-0963">Cytoplasm</keyword>
<keyword id="KW-0456">Lyase</keyword>
<keyword id="KW-0479">Metal-binding</keyword>
<keyword id="KW-0520">NAD</keyword>
<keyword id="KW-0547">Nucleotide-binding</keyword>
<keyword id="KW-0862">Zinc</keyword>
<protein>
    <recommendedName>
        <fullName evidence="1">3-dehydroquinate synthase</fullName>
        <shortName evidence="1">DHQS</shortName>
        <ecNumber evidence="1">4.2.3.4</ecNumber>
    </recommendedName>
</protein>
<accession>A1AW10</accession>
<comment type="function">
    <text evidence="1">Catalyzes the conversion of 3-deoxy-D-arabino-heptulosonate 7-phosphate (DAHP) to dehydroquinate (DHQ).</text>
</comment>
<comment type="catalytic activity">
    <reaction evidence="1">
        <text>7-phospho-2-dehydro-3-deoxy-D-arabino-heptonate = 3-dehydroquinate + phosphate</text>
        <dbReference type="Rhea" id="RHEA:21968"/>
        <dbReference type="ChEBI" id="CHEBI:32364"/>
        <dbReference type="ChEBI" id="CHEBI:43474"/>
        <dbReference type="ChEBI" id="CHEBI:58394"/>
        <dbReference type="EC" id="4.2.3.4"/>
    </reaction>
</comment>
<comment type="cofactor">
    <cofactor evidence="1">
        <name>Co(2+)</name>
        <dbReference type="ChEBI" id="CHEBI:48828"/>
    </cofactor>
    <cofactor evidence="1">
        <name>Zn(2+)</name>
        <dbReference type="ChEBI" id="CHEBI:29105"/>
    </cofactor>
    <text evidence="1">Binds 1 divalent metal cation per subunit. Can use either Co(2+) or Zn(2+).</text>
</comment>
<comment type="cofactor">
    <cofactor evidence="1">
        <name>NAD(+)</name>
        <dbReference type="ChEBI" id="CHEBI:57540"/>
    </cofactor>
</comment>
<comment type="pathway">
    <text evidence="1">Metabolic intermediate biosynthesis; chorismate biosynthesis; chorismate from D-erythrose 4-phosphate and phosphoenolpyruvate: step 2/7.</text>
</comment>
<comment type="subcellular location">
    <subcellularLocation>
        <location evidence="1">Cytoplasm</location>
    </subcellularLocation>
</comment>
<comment type="similarity">
    <text evidence="1">Belongs to the sugar phosphate cyclases superfamily. Dehydroquinate synthase family.</text>
</comment>
<name>AROB_RUTMC</name>
<organism>
    <name type="scientific">Ruthia magnifica subsp. Calyptogena magnifica</name>
    <dbReference type="NCBI Taxonomy" id="413404"/>
    <lineage>
        <taxon>Bacteria</taxon>
        <taxon>Pseudomonadati</taxon>
        <taxon>Pseudomonadota</taxon>
        <taxon>Gammaproteobacteria</taxon>
        <taxon>Candidatus Pseudothioglobaceae</taxon>
        <taxon>Candidatus Ruthturnera</taxon>
    </lineage>
</organism>